<sequence>MTKEFHHITVLLHETVDMLDIKPDGIYVDATLGGAGHSSYLLSKLNDNGHLYCFDQDQKAIDNAQVFLKSYVDRGMVTFIKANFRHLKSELNALGVTEIDGILYDLGVSSPQLDERERGFSYKQDAPLDMRMDSDAALTAYHVVNDYPFQDLVRIFFKYGEDKFSKQIARKIEQARAIKPIETTAELAEIIKSAKPAKELKKKGHPAKQIFQAIRIEVNDELGAADESIQEAMTMLALNGRISVITFHSLEDRLTKQLFKEASTVDVPKGIPFIPEDMQPKFELVTRKPILPSQEELLANNRAHSAKLRVARKVRM</sequence>
<gene>
    <name evidence="1" type="primary">rsmH</name>
    <name type="synonym">mraW</name>
    <name type="ordered locus">SUB1421</name>
</gene>
<reference key="1">
    <citation type="journal article" date="2009" name="BMC Genomics">
        <title>Evidence for niche adaptation in the genome of the bovine pathogen Streptococcus uberis.</title>
        <authorList>
            <person name="Ward P.N."/>
            <person name="Holden M.T.G."/>
            <person name="Leigh J.A."/>
            <person name="Lennard N."/>
            <person name="Bignell A."/>
            <person name="Barron A."/>
            <person name="Clark L."/>
            <person name="Quail M.A."/>
            <person name="Woodward J."/>
            <person name="Barrell B.G."/>
            <person name="Egan S.A."/>
            <person name="Field T.R."/>
            <person name="Maskell D."/>
            <person name="Kehoe M."/>
            <person name="Dowson C.G."/>
            <person name="Chanter N."/>
            <person name="Whatmore A.M."/>
            <person name="Bentley S.D."/>
            <person name="Parkhill J."/>
        </authorList>
    </citation>
    <scope>NUCLEOTIDE SEQUENCE [LARGE SCALE GENOMIC DNA]</scope>
    <source>
        <strain>ATCC BAA-854 / 0140J</strain>
    </source>
</reference>
<keyword id="KW-0963">Cytoplasm</keyword>
<keyword id="KW-0489">Methyltransferase</keyword>
<keyword id="KW-1185">Reference proteome</keyword>
<keyword id="KW-0698">rRNA processing</keyword>
<keyword id="KW-0949">S-adenosyl-L-methionine</keyword>
<keyword id="KW-0808">Transferase</keyword>
<evidence type="ECO:0000255" key="1">
    <source>
        <dbReference type="HAMAP-Rule" id="MF_01007"/>
    </source>
</evidence>
<comment type="function">
    <text evidence="1">Specifically methylates the N4 position of cytidine in position 1402 (C1402) of 16S rRNA.</text>
</comment>
<comment type="catalytic activity">
    <reaction evidence="1">
        <text>cytidine(1402) in 16S rRNA + S-adenosyl-L-methionine = N(4)-methylcytidine(1402) in 16S rRNA + S-adenosyl-L-homocysteine + H(+)</text>
        <dbReference type="Rhea" id="RHEA:42928"/>
        <dbReference type="Rhea" id="RHEA-COMP:10286"/>
        <dbReference type="Rhea" id="RHEA-COMP:10287"/>
        <dbReference type="ChEBI" id="CHEBI:15378"/>
        <dbReference type="ChEBI" id="CHEBI:57856"/>
        <dbReference type="ChEBI" id="CHEBI:59789"/>
        <dbReference type="ChEBI" id="CHEBI:74506"/>
        <dbReference type="ChEBI" id="CHEBI:82748"/>
        <dbReference type="EC" id="2.1.1.199"/>
    </reaction>
</comment>
<comment type="subcellular location">
    <subcellularLocation>
        <location evidence="1">Cytoplasm</location>
    </subcellularLocation>
</comment>
<comment type="similarity">
    <text evidence="1">Belongs to the methyltransferase superfamily. RsmH family.</text>
</comment>
<accession>B9DV78</accession>
<name>RSMH_STRU0</name>
<organism>
    <name type="scientific">Streptococcus uberis (strain ATCC BAA-854 / 0140J)</name>
    <dbReference type="NCBI Taxonomy" id="218495"/>
    <lineage>
        <taxon>Bacteria</taxon>
        <taxon>Bacillati</taxon>
        <taxon>Bacillota</taxon>
        <taxon>Bacilli</taxon>
        <taxon>Lactobacillales</taxon>
        <taxon>Streptococcaceae</taxon>
        <taxon>Streptococcus</taxon>
    </lineage>
</organism>
<dbReference type="EC" id="2.1.1.199" evidence="1"/>
<dbReference type="EMBL" id="AM946015">
    <property type="protein sequence ID" value="CAR43080.1"/>
    <property type="molecule type" value="Genomic_DNA"/>
</dbReference>
<dbReference type="RefSeq" id="WP_015911741.1">
    <property type="nucleotide sequence ID" value="NC_012004.1"/>
</dbReference>
<dbReference type="SMR" id="B9DV78"/>
<dbReference type="STRING" id="218495.SUB1421"/>
<dbReference type="GeneID" id="93826744"/>
<dbReference type="KEGG" id="sub:SUB1421"/>
<dbReference type="eggNOG" id="COG0275">
    <property type="taxonomic scope" value="Bacteria"/>
</dbReference>
<dbReference type="HOGENOM" id="CLU_038422_2_0_9"/>
<dbReference type="Proteomes" id="UP000000449">
    <property type="component" value="Chromosome"/>
</dbReference>
<dbReference type="GO" id="GO:0005737">
    <property type="term" value="C:cytoplasm"/>
    <property type="evidence" value="ECO:0007669"/>
    <property type="project" value="UniProtKB-SubCell"/>
</dbReference>
<dbReference type="GO" id="GO:0071424">
    <property type="term" value="F:rRNA (cytosine-N4-)-methyltransferase activity"/>
    <property type="evidence" value="ECO:0007669"/>
    <property type="project" value="UniProtKB-UniRule"/>
</dbReference>
<dbReference type="GO" id="GO:0070475">
    <property type="term" value="P:rRNA base methylation"/>
    <property type="evidence" value="ECO:0007669"/>
    <property type="project" value="UniProtKB-UniRule"/>
</dbReference>
<dbReference type="FunFam" id="1.10.150.170:FF:000001">
    <property type="entry name" value="Ribosomal RNA small subunit methyltransferase H"/>
    <property type="match status" value="1"/>
</dbReference>
<dbReference type="Gene3D" id="1.10.150.170">
    <property type="entry name" value="Putative methyltransferase TM0872, insert domain"/>
    <property type="match status" value="1"/>
</dbReference>
<dbReference type="Gene3D" id="3.40.50.150">
    <property type="entry name" value="Vaccinia Virus protein VP39"/>
    <property type="match status" value="1"/>
</dbReference>
<dbReference type="HAMAP" id="MF_01007">
    <property type="entry name" value="16SrRNA_methyltr_H"/>
    <property type="match status" value="1"/>
</dbReference>
<dbReference type="InterPro" id="IPR002903">
    <property type="entry name" value="RsmH"/>
</dbReference>
<dbReference type="InterPro" id="IPR023397">
    <property type="entry name" value="SAM-dep_MeTrfase_MraW_recog"/>
</dbReference>
<dbReference type="InterPro" id="IPR029063">
    <property type="entry name" value="SAM-dependent_MTases_sf"/>
</dbReference>
<dbReference type="NCBIfam" id="TIGR00006">
    <property type="entry name" value="16S rRNA (cytosine(1402)-N(4))-methyltransferase RsmH"/>
    <property type="match status" value="1"/>
</dbReference>
<dbReference type="PANTHER" id="PTHR11265:SF0">
    <property type="entry name" value="12S RRNA N4-METHYLCYTIDINE METHYLTRANSFERASE"/>
    <property type="match status" value="1"/>
</dbReference>
<dbReference type="PANTHER" id="PTHR11265">
    <property type="entry name" value="S-ADENOSYL-METHYLTRANSFERASE MRAW"/>
    <property type="match status" value="1"/>
</dbReference>
<dbReference type="Pfam" id="PF01795">
    <property type="entry name" value="Methyltransf_5"/>
    <property type="match status" value="1"/>
</dbReference>
<dbReference type="PIRSF" id="PIRSF004486">
    <property type="entry name" value="MraW"/>
    <property type="match status" value="1"/>
</dbReference>
<dbReference type="SUPFAM" id="SSF81799">
    <property type="entry name" value="Putative methyltransferase TM0872, insert domain"/>
    <property type="match status" value="1"/>
</dbReference>
<dbReference type="SUPFAM" id="SSF53335">
    <property type="entry name" value="S-adenosyl-L-methionine-dependent methyltransferases"/>
    <property type="match status" value="1"/>
</dbReference>
<protein>
    <recommendedName>
        <fullName evidence="1">Ribosomal RNA small subunit methyltransferase H</fullName>
        <ecNumber evidence="1">2.1.1.199</ecNumber>
    </recommendedName>
    <alternativeName>
        <fullName evidence="1">16S rRNA m(4)C1402 methyltransferase</fullName>
    </alternativeName>
    <alternativeName>
        <fullName evidence="1">rRNA (cytosine-N(4)-)-methyltransferase RsmH</fullName>
    </alternativeName>
</protein>
<feature type="chain" id="PRO_0000387171" description="Ribosomal RNA small subunit methyltransferase H">
    <location>
        <begin position="1"/>
        <end position="316"/>
    </location>
</feature>
<feature type="binding site" evidence="1">
    <location>
        <begin position="35"/>
        <end position="37"/>
    </location>
    <ligand>
        <name>S-adenosyl-L-methionine</name>
        <dbReference type="ChEBI" id="CHEBI:59789"/>
    </ligand>
</feature>
<feature type="binding site" evidence="1">
    <location>
        <position position="55"/>
    </location>
    <ligand>
        <name>S-adenosyl-L-methionine</name>
        <dbReference type="ChEBI" id="CHEBI:59789"/>
    </ligand>
</feature>
<feature type="binding site" evidence="1">
    <location>
        <position position="84"/>
    </location>
    <ligand>
        <name>S-adenosyl-L-methionine</name>
        <dbReference type="ChEBI" id="CHEBI:59789"/>
    </ligand>
</feature>
<feature type="binding site" evidence="1">
    <location>
        <position position="105"/>
    </location>
    <ligand>
        <name>S-adenosyl-L-methionine</name>
        <dbReference type="ChEBI" id="CHEBI:59789"/>
    </ligand>
</feature>
<feature type="binding site" evidence="1">
    <location>
        <position position="112"/>
    </location>
    <ligand>
        <name>S-adenosyl-L-methionine</name>
        <dbReference type="ChEBI" id="CHEBI:59789"/>
    </ligand>
</feature>
<proteinExistence type="inferred from homology"/>